<protein>
    <recommendedName>
        <fullName>L-cysteine:1D-myo-inositol 2-amino-2-deoxy-alpha-D-glucopyranoside ligase</fullName>
        <shortName>L-Cys:GlcN-Ins ligase</shortName>
        <ecNumber>6.3.1.13</ecNumber>
    </recommendedName>
    <alternativeName>
        <fullName>Mycothiol ligase</fullName>
        <shortName>MSH ligase</shortName>
    </alternativeName>
</protein>
<organism>
    <name type="scientific">Mycobacterium bovis (strain ATCC BAA-935 / AF2122/97)</name>
    <dbReference type="NCBI Taxonomy" id="233413"/>
    <lineage>
        <taxon>Bacteria</taxon>
        <taxon>Bacillati</taxon>
        <taxon>Actinomycetota</taxon>
        <taxon>Actinomycetes</taxon>
        <taxon>Mycobacteriales</taxon>
        <taxon>Mycobacteriaceae</taxon>
        <taxon>Mycobacterium</taxon>
        <taxon>Mycobacterium tuberculosis complex</taxon>
    </lineage>
</organism>
<sequence>MQSWYCPPVPVLPGRGPQLRLYDSADRQVRPVAPGSKATMYVCGITPYDATHLGHAATYVTFDLIHRLWLDLGHELHYVQNITDIDDPLFERADRDGVDWRDLAQAEVALFCEDMAALRVLPPQDYVGATEAIAEMVELIEKMLACGAAYVIDREMGEYQDIYFRADATLQFGYESGYDRDTMLRLCEERGGDPRRPGKSDELDALLWRAARPGEPSWPSPFGPGRPGWHVECAAIALSRIGSGLDIQGGGSDLIFPHHEFTAAHAECVSGERRFARHYVHAGMIGWDGHKMSKSRGNLVLVSALRAQDVEPSAVRLGLLAGHYRADRFWSQQVLDEATARLHRWRTATALPAGPAAVDVVARVRRYLADDLDTPKAIAALDGWVTDAVEYGGHDAGAPKLVATAIDALLGVDL</sequence>
<name>MSHC_MYCBO</name>
<dbReference type="EC" id="6.3.1.13"/>
<dbReference type="EMBL" id="LT708304">
    <property type="protein sequence ID" value="SIU00761.1"/>
    <property type="molecule type" value="Genomic_DNA"/>
</dbReference>
<dbReference type="RefSeq" id="NP_855803.1">
    <property type="nucleotide sequence ID" value="NC_002945.3"/>
</dbReference>
<dbReference type="RefSeq" id="WP_003411091.1">
    <property type="nucleotide sequence ID" value="NC_002945.4"/>
</dbReference>
<dbReference type="SMR" id="P67018"/>
<dbReference type="KEGG" id="mbo:BQ2027_MB2154C"/>
<dbReference type="PATRIC" id="fig|233413.5.peg.2368"/>
<dbReference type="Proteomes" id="UP000001419">
    <property type="component" value="Chromosome"/>
</dbReference>
<dbReference type="GO" id="GO:0005829">
    <property type="term" value="C:cytosol"/>
    <property type="evidence" value="ECO:0007669"/>
    <property type="project" value="TreeGrafter"/>
</dbReference>
<dbReference type="GO" id="GO:0005524">
    <property type="term" value="F:ATP binding"/>
    <property type="evidence" value="ECO:0007669"/>
    <property type="project" value="UniProtKB-KW"/>
</dbReference>
<dbReference type="GO" id="GO:0035446">
    <property type="term" value="F:cysteine-glucosaminylinositol ligase activity"/>
    <property type="evidence" value="ECO:0007669"/>
    <property type="project" value="UniProtKB-UniRule"/>
</dbReference>
<dbReference type="GO" id="GO:0004817">
    <property type="term" value="F:cysteine-tRNA ligase activity"/>
    <property type="evidence" value="ECO:0007669"/>
    <property type="project" value="TreeGrafter"/>
</dbReference>
<dbReference type="GO" id="GO:0008270">
    <property type="term" value="F:zinc ion binding"/>
    <property type="evidence" value="ECO:0007669"/>
    <property type="project" value="UniProtKB-UniRule"/>
</dbReference>
<dbReference type="GO" id="GO:0006423">
    <property type="term" value="P:cysteinyl-tRNA aminoacylation"/>
    <property type="evidence" value="ECO:0007669"/>
    <property type="project" value="TreeGrafter"/>
</dbReference>
<dbReference type="GO" id="GO:0010125">
    <property type="term" value="P:mycothiol biosynthetic process"/>
    <property type="evidence" value="ECO:0007669"/>
    <property type="project" value="UniProtKB-UniRule"/>
</dbReference>
<dbReference type="CDD" id="cd07955">
    <property type="entry name" value="Anticodon_Ia_Cys_like"/>
    <property type="match status" value="1"/>
</dbReference>
<dbReference type="CDD" id="cd00672">
    <property type="entry name" value="CysRS_core"/>
    <property type="match status" value="1"/>
</dbReference>
<dbReference type="FunFam" id="1.20.120.640:FF:000001">
    <property type="entry name" value="L-cysteine:1D-myo-inositol 2-amino-2-deoxy-alpha-D-glucopyranoside ligase"/>
    <property type="match status" value="1"/>
</dbReference>
<dbReference type="FunFam" id="3.40.50.620:FF:000134">
    <property type="entry name" value="L-cysteine:1D-myo-inositol 2-amino-2-deoxy-alpha-D-glucopyranoside ligase"/>
    <property type="match status" value="1"/>
</dbReference>
<dbReference type="Gene3D" id="1.20.120.640">
    <property type="entry name" value="Anticodon-binding domain of a subclass of class I aminoacyl-tRNA synthetases"/>
    <property type="match status" value="1"/>
</dbReference>
<dbReference type="Gene3D" id="3.40.50.620">
    <property type="entry name" value="HUPs"/>
    <property type="match status" value="1"/>
</dbReference>
<dbReference type="HAMAP" id="MF_01697">
    <property type="entry name" value="MshC"/>
    <property type="match status" value="1"/>
</dbReference>
<dbReference type="InterPro" id="IPR024909">
    <property type="entry name" value="Cys-tRNA/MSH_ligase"/>
</dbReference>
<dbReference type="InterPro" id="IPR017812">
    <property type="entry name" value="Mycothiol_ligase_MshC"/>
</dbReference>
<dbReference type="InterPro" id="IPR014729">
    <property type="entry name" value="Rossmann-like_a/b/a_fold"/>
</dbReference>
<dbReference type="InterPro" id="IPR032678">
    <property type="entry name" value="tRNA-synt_1_cat_dom"/>
</dbReference>
<dbReference type="NCBIfam" id="TIGR03447">
    <property type="entry name" value="mycothiol_MshC"/>
    <property type="match status" value="1"/>
</dbReference>
<dbReference type="PANTHER" id="PTHR10890:SF3">
    <property type="entry name" value="CYSTEINE--TRNA LIGASE, CYTOPLASMIC"/>
    <property type="match status" value="1"/>
</dbReference>
<dbReference type="PANTHER" id="PTHR10890">
    <property type="entry name" value="CYSTEINYL-TRNA SYNTHETASE"/>
    <property type="match status" value="1"/>
</dbReference>
<dbReference type="Pfam" id="PF01406">
    <property type="entry name" value="tRNA-synt_1e"/>
    <property type="match status" value="1"/>
</dbReference>
<dbReference type="PRINTS" id="PR00983">
    <property type="entry name" value="TRNASYNTHCYS"/>
</dbReference>
<dbReference type="SUPFAM" id="SSF52374">
    <property type="entry name" value="Nucleotidylyl transferase"/>
    <property type="match status" value="1"/>
</dbReference>
<evidence type="ECO:0000250" key="1"/>
<evidence type="ECO:0000305" key="2"/>
<feature type="chain" id="PRO_0000159436" description="L-cysteine:1D-myo-inositol 2-amino-2-deoxy-alpha-D-glucopyranoside ligase">
    <location>
        <begin position="1"/>
        <end position="414"/>
    </location>
</feature>
<feature type="short sequence motif" description="'HIGH' region">
    <location>
        <begin position="45"/>
        <end position="55"/>
    </location>
</feature>
<feature type="short sequence motif" description="'ERGGDP' region">
    <location>
        <begin position="189"/>
        <end position="194"/>
    </location>
</feature>
<feature type="short sequence motif" description="'KMSKS' region">
    <location>
        <begin position="291"/>
        <end position="295"/>
    </location>
</feature>
<feature type="binding site" evidence="1">
    <location>
        <begin position="43"/>
        <end position="46"/>
    </location>
    <ligand>
        <name>L-cysteinyl-5'-AMP</name>
        <dbReference type="ChEBI" id="CHEBI:144924"/>
    </ligand>
</feature>
<feature type="binding site" evidence="1">
    <location>
        <position position="43"/>
    </location>
    <ligand>
        <name>Zn(2+)</name>
        <dbReference type="ChEBI" id="CHEBI:29105"/>
    </ligand>
</feature>
<feature type="binding site" evidence="1">
    <location>
        <position position="58"/>
    </location>
    <ligand>
        <name>L-cysteinyl-5'-AMP</name>
        <dbReference type="ChEBI" id="CHEBI:144924"/>
    </ligand>
</feature>
<feature type="binding site" evidence="1">
    <location>
        <begin position="81"/>
        <end position="83"/>
    </location>
    <ligand>
        <name>L-cysteinyl-5'-AMP</name>
        <dbReference type="ChEBI" id="CHEBI:144924"/>
    </ligand>
</feature>
<feature type="binding site" evidence="1">
    <location>
        <position position="229"/>
    </location>
    <ligand>
        <name>L-cysteinyl-5'-AMP</name>
        <dbReference type="ChEBI" id="CHEBI:144924"/>
    </ligand>
</feature>
<feature type="binding site" evidence="1">
    <location>
        <position position="233"/>
    </location>
    <ligand>
        <name>Zn(2+)</name>
        <dbReference type="ChEBI" id="CHEBI:29105"/>
    </ligand>
</feature>
<feature type="binding site" evidence="1">
    <location>
        <begin position="251"/>
        <end position="253"/>
    </location>
    <ligand>
        <name>L-cysteinyl-5'-AMP</name>
        <dbReference type="ChEBI" id="CHEBI:144924"/>
    </ligand>
</feature>
<feature type="binding site" evidence="1">
    <location>
        <position position="258"/>
    </location>
    <ligand>
        <name>Zn(2+)</name>
        <dbReference type="ChEBI" id="CHEBI:29105"/>
    </ligand>
</feature>
<feature type="binding site" evidence="1">
    <location>
        <position position="285"/>
    </location>
    <ligand>
        <name>L-cysteinyl-5'-AMP</name>
        <dbReference type="ChEBI" id="CHEBI:144924"/>
    </ligand>
</feature>
<accession>P67018</accession>
<accession>A0A1R3Y0A0</accession>
<accession>O33264</accession>
<accession>X2BJG6</accession>
<gene>
    <name type="primary">mshC</name>
    <name type="synonym">cysS2</name>
    <name type="ordered locus">BQ2027_MB2154C</name>
</gene>
<keyword id="KW-0067">ATP-binding</keyword>
<keyword id="KW-0436">Ligase</keyword>
<keyword id="KW-0479">Metal-binding</keyword>
<keyword id="KW-0547">Nucleotide-binding</keyword>
<keyword id="KW-1185">Reference proteome</keyword>
<keyword id="KW-0862">Zinc</keyword>
<comment type="function">
    <text evidence="1">Catalyzes the ATP-dependent condensation of GlcN-Ins and L-cysteine to form L-Cys-GlcN-Ins.</text>
</comment>
<comment type="catalytic activity">
    <reaction>
        <text>1D-myo-inositol 2-amino-2-deoxy-alpha-D-glucopyranoside + L-cysteine + ATP = 1D-myo-inositol 2-(L-cysteinylamino)-2-deoxy-alpha-D-glucopyranoside + AMP + diphosphate + H(+)</text>
        <dbReference type="Rhea" id="RHEA:26176"/>
        <dbReference type="ChEBI" id="CHEBI:15378"/>
        <dbReference type="ChEBI" id="CHEBI:30616"/>
        <dbReference type="ChEBI" id="CHEBI:33019"/>
        <dbReference type="ChEBI" id="CHEBI:35235"/>
        <dbReference type="ChEBI" id="CHEBI:58886"/>
        <dbReference type="ChEBI" id="CHEBI:58887"/>
        <dbReference type="ChEBI" id="CHEBI:456215"/>
        <dbReference type="EC" id="6.3.1.13"/>
    </reaction>
</comment>
<comment type="cofactor">
    <cofactor evidence="1">
        <name>Zn(2+)</name>
        <dbReference type="ChEBI" id="CHEBI:29105"/>
    </cofactor>
    <text evidence="1">Binds 1 zinc ion per subunit.</text>
</comment>
<comment type="subunit">
    <text evidence="1">Monomer.</text>
</comment>
<comment type="similarity">
    <text evidence="2">Belongs to the class-I aminoacyl-tRNA synthetase family. MshC subfamily.</text>
</comment>
<proteinExistence type="inferred from homology"/>
<reference key="1">
    <citation type="journal article" date="2003" name="Proc. Natl. Acad. Sci. U.S.A.">
        <title>The complete genome sequence of Mycobacterium bovis.</title>
        <authorList>
            <person name="Garnier T."/>
            <person name="Eiglmeier K."/>
            <person name="Camus J.-C."/>
            <person name="Medina N."/>
            <person name="Mansoor H."/>
            <person name="Pryor M."/>
            <person name="Duthoy S."/>
            <person name="Grondin S."/>
            <person name="Lacroix C."/>
            <person name="Monsempe C."/>
            <person name="Simon S."/>
            <person name="Harris B."/>
            <person name="Atkin R."/>
            <person name="Doggett J."/>
            <person name="Mayes R."/>
            <person name="Keating L."/>
            <person name="Wheeler P.R."/>
            <person name="Parkhill J."/>
            <person name="Barrell B.G."/>
            <person name="Cole S.T."/>
            <person name="Gordon S.V."/>
            <person name="Hewinson R.G."/>
        </authorList>
    </citation>
    <scope>NUCLEOTIDE SEQUENCE [LARGE SCALE GENOMIC DNA]</scope>
    <source>
        <strain>ATCC BAA-935 / AF2122/97</strain>
    </source>
</reference>
<reference key="2">
    <citation type="journal article" date="2017" name="Genome Announc.">
        <title>Updated reference genome sequence and annotation of Mycobacterium bovis AF2122/97.</title>
        <authorList>
            <person name="Malone K.M."/>
            <person name="Farrell D."/>
            <person name="Stuber T.P."/>
            <person name="Schubert O.T."/>
            <person name="Aebersold R."/>
            <person name="Robbe-Austerman S."/>
            <person name="Gordon S.V."/>
        </authorList>
    </citation>
    <scope>NUCLEOTIDE SEQUENCE [LARGE SCALE GENOMIC DNA]</scope>
    <scope>GENOME REANNOTATION</scope>
    <source>
        <strain>ATCC BAA-935 / AF2122/97</strain>
    </source>
</reference>